<accession>A1CW63</accession>
<feature type="chain" id="PRO_0000395733" description="Probable ubiquitination network signaling protein acrB">
    <location>
        <begin position="1"/>
        <end position="1019"/>
    </location>
</feature>
<feature type="transmembrane region" description="Helical" evidence="2">
    <location>
        <begin position="163"/>
        <end position="183"/>
    </location>
</feature>
<feature type="transmembrane region" description="Helical" evidence="2">
    <location>
        <begin position="216"/>
        <end position="236"/>
    </location>
</feature>
<feature type="transmembrane region" description="Helical" evidence="2">
    <location>
        <begin position="259"/>
        <end position="279"/>
    </location>
</feature>
<feature type="region of interest" description="Disordered" evidence="3">
    <location>
        <begin position="1"/>
        <end position="142"/>
    </location>
</feature>
<feature type="region of interest" description="Disordered" evidence="3">
    <location>
        <begin position="343"/>
        <end position="372"/>
    </location>
</feature>
<feature type="region of interest" description="Disordered" evidence="3">
    <location>
        <begin position="580"/>
        <end position="603"/>
    </location>
</feature>
<feature type="region of interest" description="Disordered" evidence="3">
    <location>
        <begin position="831"/>
        <end position="859"/>
    </location>
</feature>
<feature type="region of interest" description="Disordered" evidence="3">
    <location>
        <begin position="879"/>
        <end position="905"/>
    </location>
</feature>
<feature type="region of interest" description="Disordered" evidence="3">
    <location>
        <begin position="963"/>
        <end position="1019"/>
    </location>
</feature>
<feature type="coiled-coil region" evidence="2">
    <location>
        <begin position="602"/>
        <end position="788"/>
    </location>
</feature>
<feature type="compositionally biased region" description="Low complexity" evidence="3">
    <location>
        <begin position="33"/>
        <end position="63"/>
    </location>
</feature>
<feature type="compositionally biased region" description="Polar residues" evidence="3">
    <location>
        <begin position="68"/>
        <end position="83"/>
    </location>
</feature>
<feature type="compositionally biased region" description="Polar residues" evidence="3">
    <location>
        <begin position="102"/>
        <end position="117"/>
    </location>
</feature>
<feature type="compositionally biased region" description="Polar residues" evidence="3">
    <location>
        <begin position="131"/>
        <end position="142"/>
    </location>
</feature>
<feature type="compositionally biased region" description="Gly residues" evidence="3">
    <location>
        <begin position="992"/>
        <end position="1008"/>
    </location>
</feature>
<organism>
    <name type="scientific">Neosartorya fischeri (strain ATCC 1020 / DSM 3700 / CBS 544.65 / FGSC A1164 / JCM 1740 / NRRL 181 / WB 181)</name>
    <name type="common">Aspergillus fischerianus</name>
    <dbReference type="NCBI Taxonomy" id="331117"/>
    <lineage>
        <taxon>Eukaryota</taxon>
        <taxon>Fungi</taxon>
        <taxon>Dikarya</taxon>
        <taxon>Ascomycota</taxon>
        <taxon>Pezizomycotina</taxon>
        <taxon>Eurotiomycetes</taxon>
        <taxon>Eurotiomycetidae</taxon>
        <taxon>Eurotiales</taxon>
        <taxon>Aspergillaceae</taxon>
        <taxon>Aspergillus</taxon>
        <taxon>Aspergillus subgen. Fumigati</taxon>
    </lineage>
</organism>
<gene>
    <name type="primary">acrB</name>
    <name type="synonym">acr2</name>
    <name type="ORF">NFIA_103530</name>
</gene>
<protein>
    <recommendedName>
        <fullName>Probable ubiquitination network signaling protein acrB</fullName>
    </recommendedName>
    <alternativeName>
        <fullName>Acriflavine resistance protein B</fullName>
    </alternativeName>
</protein>
<name>ACRB_NEOFI</name>
<keyword id="KW-0175">Coiled coil</keyword>
<keyword id="KW-0472">Membrane</keyword>
<keyword id="KW-1185">Reference proteome</keyword>
<keyword id="KW-0812">Transmembrane</keyword>
<keyword id="KW-1133">Transmembrane helix</keyword>
<keyword id="KW-0833">Ubl conjugation pathway</keyword>
<proteinExistence type="inferred from homology"/>
<dbReference type="EMBL" id="DS027685">
    <property type="protein sequence ID" value="EAW24865.1"/>
    <property type="molecule type" value="Genomic_DNA"/>
</dbReference>
<dbReference type="RefSeq" id="XP_001266762.1">
    <property type="nucleotide sequence ID" value="XM_001266761.1"/>
</dbReference>
<dbReference type="SMR" id="A1CW63"/>
<dbReference type="STRING" id="331117.A1CW63"/>
<dbReference type="EnsemblFungi" id="EAW24865">
    <property type="protein sequence ID" value="EAW24865"/>
    <property type="gene ID" value="NFIA_103530"/>
</dbReference>
<dbReference type="GeneID" id="4593362"/>
<dbReference type="KEGG" id="nfi:NFIA_103530"/>
<dbReference type="VEuPathDB" id="FungiDB:NFIA_103530"/>
<dbReference type="eggNOG" id="ENOG502QSPS">
    <property type="taxonomic scope" value="Eukaryota"/>
</dbReference>
<dbReference type="HOGENOM" id="CLU_005822_0_0_1"/>
<dbReference type="OMA" id="NNAFWQP"/>
<dbReference type="OrthoDB" id="4158994at2759"/>
<dbReference type="Proteomes" id="UP000006702">
    <property type="component" value="Unassembled WGS sequence"/>
</dbReference>
<dbReference type="GO" id="GO:0016020">
    <property type="term" value="C:membrane"/>
    <property type="evidence" value="ECO:0007669"/>
    <property type="project" value="UniProtKB-SubCell"/>
</dbReference>
<dbReference type="PROSITE" id="PS00589">
    <property type="entry name" value="PTS_HPR_SER"/>
    <property type="match status" value="1"/>
</dbReference>
<comment type="function">
    <text evidence="1">Component of the regulatory network controlling carbon source utilization through ubiquitination and deubiquitination involving creA, creB, creC, creD and acrB. Involved in resistance to acriflavine, and required for normal growth on a range of sole carbon sources, including fructose, cellobiose, raffinose, and starch, and reduced utilization of amino acids, including GABA and beta-alanine, as sole carbon and nitrogen sources (By similarity).</text>
</comment>
<comment type="subcellular location">
    <subcellularLocation>
        <location evidence="4">Membrane</location>
        <topology evidence="4">Multi-pass membrane protein</topology>
    </subcellularLocation>
</comment>
<comment type="similarity">
    <text evidence="4">Belongs to the acrB family.</text>
</comment>
<reference key="1">
    <citation type="journal article" date="2008" name="PLoS Genet.">
        <title>Genomic islands in the pathogenic filamentous fungus Aspergillus fumigatus.</title>
        <authorList>
            <person name="Fedorova N.D."/>
            <person name="Khaldi N."/>
            <person name="Joardar V.S."/>
            <person name="Maiti R."/>
            <person name="Amedeo P."/>
            <person name="Anderson M.J."/>
            <person name="Crabtree J."/>
            <person name="Silva J.C."/>
            <person name="Badger J.H."/>
            <person name="Albarraq A."/>
            <person name="Angiuoli S."/>
            <person name="Bussey H."/>
            <person name="Bowyer P."/>
            <person name="Cotty P.J."/>
            <person name="Dyer P.S."/>
            <person name="Egan A."/>
            <person name="Galens K."/>
            <person name="Fraser-Liggett C.M."/>
            <person name="Haas B.J."/>
            <person name="Inman J.M."/>
            <person name="Kent R."/>
            <person name="Lemieux S."/>
            <person name="Malavazi I."/>
            <person name="Orvis J."/>
            <person name="Roemer T."/>
            <person name="Ronning C.M."/>
            <person name="Sundaram J.P."/>
            <person name="Sutton G."/>
            <person name="Turner G."/>
            <person name="Venter J.C."/>
            <person name="White O.R."/>
            <person name="Whitty B.R."/>
            <person name="Youngman P."/>
            <person name="Wolfe K.H."/>
            <person name="Goldman G.H."/>
            <person name="Wortman J.R."/>
            <person name="Jiang B."/>
            <person name="Denning D.W."/>
            <person name="Nierman W.C."/>
        </authorList>
    </citation>
    <scope>NUCLEOTIDE SEQUENCE [LARGE SCALE GENOMIC DNA]</scope>
    <source>
        <strain>ATCC 1020 / DSM 3700 / CBS 544.65 / FGSC A1164 / JCM 1740 / NRRL 181 / WB 181</strain>
    </source>
</reference>
<sequence length="1019" mass="109756">MPRSSATARKSHSNRHENGSANTGKKVAKQKSNGHLNGNLNGGSASSSLSSSQVDLPSSRSSSDPVIPTTTATSTKLNGTPDSSKGDCNAPDHLNGYAKGNTDMSYVQNNGVASQTGGDVAGPASRRTEKSATGNKRSPSNASINPLQLASTILKSCPMYDTIAILIFLLQLPPMVLTLVQFLFASLTFLPPSGASAGSLTSNFDIFQGPAGTPSLGTMIAMDGFCLLIWGLFMWTWAQNFALDLAHVQVAITLGGGGFGKNGGVNTLCVGIVLIMHLVRSKGIQDFVIGHLLSSNIISPDMLSQYSHLLPTEFRRTEPQTSPSWLRSLLAVHILAQAGTAMARRSMAKNRTPNPPRTGKRIDTEASAGSQTQIDSAFESGASVSSYIGADGQIVTPAAHKDGRDRLLSAKKRRRQANQVRSRQPFWAALASTKITVMREYEHSRALSKTARGLPMTEDDLQGLSLDDGLVWITEIDSSTIKFAAGDFSSADDSSGSGACEAGCLGSEDMEPFYVCVNGALWATATICKVHDAPKGSSMVHWRGEISGLAPNCAYTCSFVRSDTDEEICVISVKTPATNDAEQVSSVSTPPQPSYRPSSPTTTLKNSIVNAEAKLNEKRSRLRKAKNDHKLVISKIRKELDNYNHRLHSGTDENRQKQRSLQLERNIRQTEEATALLEDQLDNLENVPDEELRKWSDQKAKYEHELGLLNSAKEELASARSAVAREVSSLETELSSAIQRRERLQSRRTRINEQYERIVSANAQGLNERERRAAEQFAREQDQAKLEATFNEQFASIGQSVQEYQLRAQQIWQQCDAIEQAIQQQHQQMLLDPGPLTPEGNLPGTNPFSESALPLGALTSTAPSNRSLLGLSFPPLKSSPLQTASSPVGASSSHPTSPVQQPSYLNFPTSPLVNASSHLDSDFVYRDRSFSNRSARSSLYGSDFMDSSRRQPFQLDLSELLADKRSPGSDSNTALNSGLRPVSSPFQRAGSRGSGSGSNGSGGSGSGSGSPSSVYGKTN</sequence>
<evidence type="ECO:0000250" key="1"/>
<evidence type="ECO:0000255" key="2"/>
<evidence type="ECO:0000256" key="3">
    <source>
        <dbReference type="SAM" id="MobiDB-lite"/>
    </source>
</evidence>
<evidence type="ECO:0000305" key="4"/>